<organism>
    <name type="scientific">Clostridium beijerinckii (strain ATCC 51743 / NCIMB 8052)</name>
    <name type="common">Clostridium acetobutylicum</name>
    <dbReference type="NCBI Taxonomy" id="290402"/>
    <lineage>
        <taxon>Bacteria</taxon>
        <taxon>Bacillati</taxon>
        <taxon>Bacillota</taxon>
        <taxon>Clostridia</taxon>
        <taxon>Eubacteriales</taxon>
        <taxon>Clostridiaceae</taxon>
        <taxon>Clostridium</taxon>
    </lineage>
</organism>
<evidence type="ECO:0000250" key="1"/>
<evidence type="ECO:0000255" key="2">
    <source>
        <dbReference type="HAMAP-Rule" id="MF_00118"/>
    </source>
</evidence>
<feature type="chain" id="PRO_0000337355" description="Elongation factor Tu">
    <location>
        <begin position="1"/>
        <end position="397"/>
    </location>
</feature>
<feature type="domain" description="tr-type G">
    <location>
        <begin position="10"/>
        <end position="206"/>
    </location>
</feature>
<feature type="region of interest" description="G1" evidence="1">
    <location>
        <begin position="19"/>
        <end position="26"/>
    </location>
</feature>
<feature type="region of interest" description="G2" evidence="1">
    <location>
        <begin position="60"/>
        <end position="64"/>
    </location>
</feature>
<feature type="region of interest" description="G3" evidence="1">
    <location>
        <begin position="81"/>
        <end position="84"/>
    </location>
</feature>
<feature type="region of interest" description="G4" evidence="1">
    <location>
        <begin position="136"/>
        <end position="139"/>
    </location>
</feature>
<feature type="region of interest" description="G5" evidence="1">
    <location>
        <begin position="174"/>
        <end position="176"/>
    </location>
</feature>
<feature type="binding site" evidence="2">
    <location>
        <begin position="19"/>
        <end position="26"/>
    </location>
    <ligand>
        <name>GTP</name>
        <dbReference type="ChEBI" id="CHEBI:37565"/>
    </ligand>
</feature>
<feature type="binding site" evidence="2">
    <location>
        <position position="26"/>
    </location>
    <ligand>
        <name>Mg(2+)</name>
        <dbReference type="ChEBI" id="CHEBI:18420"/>
    </ligand>
</feature>
<feature type="binding site" evidence="2">
    <location>
        <begin position="81"/>
        <end position="85"/>
    </location>
    <ligand>
        <name>GTP</name>
        <dbReference type="ChEBI" id="CHEBI:37565"/>
    </ligand>
</feature>
<feature type="binding site" evidence="2">
    <location>
        <begin position="136"/>
        <end position="139"/>
    </location>
    <ligand>
        <name>GTP</name>
        <dbReference type="ChEBI" id="CHEBI:37565"/>
    </ligand>
</feature>
<sequence length="397" mass="43624">MAKAKYERSKPHVNIGTIGHVDHGKTTLTAAITTVLANKGFAEAFNYADIDKAPEEKERGITINTAHVEYQTENRHYAHVDCPGHADYVKNMITGAAQMDGAILVVSAADGPMPQTREHILLGSRVGIQYIVVFLNKADMVDDPELLELVEMEVRELLSEYDFPGDDIPVITGSALKALENPTDEEAIKPIMDLMEAVDSYIPTPERATDKPFLMPIEDVFTITGRGTVATGRVEAGVLHVGDEVEIVGLTEEKKKVVVTGIEMFRKLLDEAQAGDNIGALLRGVQRTDIERGQVLSKPNSVHPHTKFVGQVYVLKKEEGGRHTPFFDGYRPQFYFRTTDVTGSIKLPDGMEMVMPGDHIDMNVELITPIAMDEGLRFAIREGGRTVGSGVVTKIVE</sequence>
<name>EFTU_CLOB8</name>
<comment type="function">
    <text evidence="2">GTP hydrolase that promotes the GTP-dependent binding of aminoacyl-tRNA to the A-site of ribosomes during protein biosynthesis.</text>
</comment>
<comment type="catalytic activity">
    <reaction evidence="2">
        <text>GTP + H2O = GDP + phosphate + H(+)</text>
        <dbReference type="Rhea" id="RHEA:19669"/>
        <dbReference type="ChEBI" id="CHEBI:15377"/>
        <dbReference type="ChEBI" id="CHEBI:15378"/>
        <dbReference type="ChEBI" id="CHEBI:37565"/>
        <dbReference type="ChEBI" id="CHEBI:43474"/>
        <dbReference type="ChEBI" id="CHEBI:58189"/>
        <dbReference type="EC" id="3.6.5.3"/>
    </reaction>
    <physiologicalReaction direction="left-to-right" evidence="2">
        <dbReference type="Rhea" id="RHEA:19670"/>
    </physiologicalReaction>
</comment>
<comment type="subunit">
    <text evidence="2">Monomer.</text>
</comment>
<comment type="subcellular location">
    <subcellularLocation>
        <location evidence="2">Cytoplasm</location>
    </subcellularLocation>
</comment>
<comment type="similarity">
    <text evidence="2">Belongs to the TRAFAC class translation factor GTPase superfamily. Classic translation factor GTPase family. EF-Tu/EF-1A subfamily.</text>
</comment>
<protein>
    <recommendedName>
        <fullName evidence="2">Elongation factor Tu</fullName>
        <shortName evidence="2">EF-Tu</shortName>
        <ecNumber evidence="2">3.6.5.3</ecNumber>
    </recommendedName>
</protein>
<reference key="1">
    <citation type="submission" date="2007-06" db="EMBL/GenBank/DDBJ databases">
        <title>Complete sequence of Clostridium beijerinckii NCIMB 8052.</title>
        <authorList>
            <consortium name="US DOE Joint Genome Institute"/>
            <person name="Copeland A."/>
            <person name="Lucas S."/>
            <person name="Lapidus A."/>
            <person name="Barry K."/>
            <person name="Detter J.C."/>
            <person name="Glavina del Rio T."/>
            <person name="Hammon N."/>
            <person name="Israni S."/>
            <person name="Dalin E."/>
            <person name="Tice H."/>
            <person name="Pitluck S."/>
            <person name="Sims D."/>
            <person name="Brettin T."/>
            <person name="Bruce D."/>
            <person name="Tapia R."/>
            <person name="Brainard J."/>
            <person name="Schmutz J."/>
            <person name="Larimer F."/>
            <person name="Land M."/>
            <person name="Hauser L."/>
            <person name="Kyrpides N."/>
            <person name="Mikhailova N."/>
            <person name="Bennet G."/>
            <person name="Cann I."/>
            <person name="Chen J.-S."/>
            <person name="Contreras A.L."/>
            <person name="Jones D."/>
            <person name="Kashket E."/>
            <person name="Mitchell W."/>
            <person name="Stoddard S."/>
            <person name="Schwarz W."/>
            <person name="Qureshi N."/>
            <person name="Young M."/>
            <person name="Shi Z."/>
            <person name="Ezeji T."/>
            <person name="White B."/>
            <person name="Blaschek H."/>
            <person name="Richardson P."/>
        </authorList>
    </citation>
    <scope>NUCLEOTIDE SEQUENCE [LARGE SCALE GENOMIC DNA]</scope>
    <source>
        <strain>ATCC 51743 / NCIMB 8052</strain>
    </source>
</reference>
<gene>
    <name evidence="2" type="primary">tuf1</name>
    <name type="ordered locus">Cbei_0136</name>
</gene>
<gene>
    <name evidence="2" type="primary">tuf2</name>
    <name type="ordered locus">Cbei_0149</name>
</gene>
<keyword id="KW-0963">Cytoplasm</keyword>
<keyword id="KW-0251">Elongation factor</keyword>
<keyword id="KW-0342">GTP-binding</keyword>
<keyword id="KW-0378">Hydrolase</keyword>
<keyword id="KW-0460">Magnesium</keyword>
<keyword id="KW-0479">Metal-binding</keyword>
<keyword id="KW-0547">Nucleotide-binding</keyword>
<keyword id="KW-0648">Protein biosynthesis</keyword>
<accession>A6LPP6</accession>
<dbReference type="EC" id="3.6.5.3" evidence="2"/>
<dbReference type="EMBL" id="CP000721">
    <property type="protein sequence ID" value="ABR32326.1"/>
    <property type="molecule type" value="Genomic_DNA"/>
</dbReference>
<dbReference type="EMBL" id="CP000721">
    <property type="protein sequence ID" value="ABR32339.1"/>
    <property type="molecule type" value="Genomic_DNA"/>
</dbReference>
<dbReference type="SMR" id="A6LPP6"/>
<dbReference type="KEGG" id="cbe:Cbei_0136"/>
<dbReference type="KEGG" id="cbe:Cbei_0149"/>
<dbReference type="eggNOG" id="COG0050">
    <property type="taxonomic scope" value="Bacteria"/>
</dbReference>
<dbReference type="HOGENOM" id="CLU_007265_0_0_9"/>
<dbReference type="Proteomes" id="UP000000565">
    <property type="component" value="Chromosome"/>
</dbReference>
<dbReference type="GO" id="GO:0005829">
    <property type="term" value="C:cytosol"/>
    <property type="evidence" value="ECO:0007669"/>
    <property type="project" value="TreeGrafter"/>
</dbReference>
<dbReference type="GO" id="GO:0005525">
    <property type="term" value="F:GTP binding"/>
    <property type="evidence" value="ECO:0007669"/>
    <property type="project" value="UniProtKB-UniRule"/>
</dbReference>
<dbReference type="GO" id="GO:0003924">
    <property type="term" value="F:GTPase activity"/>
    <property type="evidence" value="ECO:0007669"/>
    <property type="project" value="InterPro"/>
</dbReference>
<dbReference type="GO" id="GO:0003746">
    <property type="term" value="F:translation elongation factor activity"/>
    <property type="evidence" value="ECO:0007669"/>
    <property type="project" value="UniProtKB-UniRule"/>
</dbReference>
<dbReference type="CDD" id="cd01884">
    <property type="entry name" value="EF_Tu"/>
    <property type="match status" value="1"/>
</dbReference>
<dbReference type="CDD" id="cd03697">
    <property type="entry name" value="EFTU_II"/>
    <property type="match status" value="1"/>
</dbReference>
<dbReference type="CDD" id="cd03707">
    <property type="entry name" value="EFTU_III"/>
    <property type="match status" value="1"/>
</dbReference>
<dbReference type="FunFam" id="2.40.30.10:FF:000001">
    <property type="entry name" value="Elongation factor Tu"/>
    <property type="match status" value="1"/>
</dbReference>
<dbReference type="FunFam" id="3.40.50.300:FF:000003">
    <property type="entry name" value="Elongation factor Tu"/>
    <property type="match status" value="1"/>
</dbReference>
<dbReference type="Gene3D" id="3.40.50.300">
    <property type="entry name" value="P-loop containing nucleotide triphosphate hydrolases"/>
    <property type="match status" value="1"/>
</dbReference>
<dbReference type="Gene3D" id="2.40.30.10">
    <property type="entry name" value="Translation factors"/>
    <property type="match status" value="2"/>
</dbReference>
<dbReference type="HAMAP" id="MF_00118_B">
    <property type="entry name" value="EF_Tu_B"/>
    <property type="match status" value="1"/>
</dbReference>
<dbReference type="InterPro" id="IPR041709">
    <property type="entry name" value="EF-Tu_GTP-bd"/>
</dbReference>
<dbReference type="InterPro" id="IPR050055">
    <property type="entry name" value="EF-Tu_GTPase"/>
</dbReference>
<dbReference type="InterPro" id="IPR004161">
    <property type="entry name" value="EFTu-like_2"/>
</dbReference>
<dbReference type="InterPro" id="IPR033720">
    <property type="entry name" value="EFTU_2"/>
</dbReference>
<dbReference type="InterPro" id="IPR031157">
    <property type="entry name" value="G_TR_CS"/>
</dbReference>
<dbReference type="InterPro" id="IPR027417">
    <property type="entry name" value="P-loop_NTPase"/>
</dbReference>
<dbReference type="InterPro" id="IPR005225">
    <property type="entry name" value="Small_GTP-bd"/>
</dbReference>
<dbReference type="InterPro" id="IPR000795">
    <property type="entry name" value="T_Tr_GTP-bd_dom"/>
</dbReference>
<dbReference type="InterPro" id="IPR009000">
    <property type="entry name" value="Transl_B-barrel_sf"/>
</dbReference>
<dbReference type="InterPro" id="IPR009001">
    <property type="entry name" value="Transl_elong_EF1A/Init_IF2_C"/>
</dbReference>
<dbReference type="InterPro" id="IPR004541">
    <property type="entry name" value="Transl_elong_EFTu/EF1A_bac/org"/>
</dbReference>
<dbReference type="InterPro" id="IPR004160">
    <property type="entry name" value="Transl_elong_EFTu/EF1A_C"/>
</dbReference>
<dbReference type="NCBIfam" id="TIGR00485">
    <property type="entry name" value="EF-Tu"/>
    <property type="match status" value="1"/>
</dbReference>
<dbReference type="NCBIfam" id="NF000766">
    <property type="entry name" value="PRK00049.1"/>
    <property type="match status" value="1"/>
</dbReference>
<dbReference type="NCBIfam" id="NF009372">
    <property type="entry name" value="PRK12735.1"/>
    <property type="match status" value="1"/>
</dbReference>
<dbReference type="NCBIfam" id="NF009373">
    <property type="entry name" value="PRK12736.1"/>
    <property type="match status" value="1"/>
</dbReference>
<dbReference type="NCBIfam" id="TIGR00231">
    <property type="entry name" value="small_GTP"/>
    <property type="match status" value="1"/>
</dbReference>
<dbReference type="PANTHER" id="PTHR43721:SF22">
    <property type="entry name" value="ELONGATION FACTOR TU, MITOCHONDRIAL"/>
    <property type="match status" value="1"/>
</dbReference>
<dbReference type="PANTHER" id="PTHR43721">
    <property type="entry name" value="ELONGATION FACTOR TU-RELATED"/>
    <property type="match status" value="1"/>
</dbReference>
<dbReference type="Pfam" id="PF00009">
    <property type="entry name" value="GTP_EFTU"/>
    <property type="match status" value="1"/>
</dbReference>
<dbReference type="Pfam" id="PF03144">
    <property type="entry name" value="GTP_EFTU_D2"/>
    <property type="match status" value="1"/>
</dbReference>
<dbReference type="Pfam" id="PF03143">
    <property type="entry name" value="GTP_EFTU_D3"/>
    <property type="match status" value="1"/>
</dbReference>
<dbReference type="PRINTS" id="PR00315">
    <property type="entry name" value="ELONGATNFCT"/>
</dbReference>
<dbReference type="SUPFAM" id="SSF50465">
    <property type="entry name" value="EF-Tu/eEF-1alpha/eIF2-gamma C-terminal domain"/>
    <property type="match status" value="1"/>
</dbReference>
<dbReference type="SUPFAM" id="SSF52540">
    <property type="entry name" value="P-loop containing nucleoside triphosphate hydrolases"/>
    <property type="match status" value="1"/>
</dbReference>
<dbReference type="SUPFAM" id="SSF50447">
    <property type="entry name" value="Translation proteins"/>
    <property type="match status" value="1"/>
</dbReference>
<dbReference type="PROSITE" id="PS00301">
    <property type="entry name" value="G_TR_1"/>
    <property type="match status" value="1"/>
</dbReference>
<dbReference type="PROSITE" id="PS51722">
    <property type="entry name" value="G_TR_2"/>
    <property type="match status" value="1"/>
</dbReference>
<proteinExistence type="inferred from homology"/>